<organism>
    <name type="scientific">Bordetella parapertussis (strain 12822 / ATCC BAA-587 / NCTC 13253)</name>
    <dbReference type="NCBI Taxonomy" id="257311"/>
    <lineage>
        <taxon>Bacteria</taxon>
        <taxon>Pseudomonadati</taxon>
        <taxon>Pseudomonadota</taxon>
        <taxon>Betaproteobacteria</taxon>
        <taxon>Burkholderiales</taxon>
        <taxon>Alcaligenaceae</taxon>
        <taxon>Bordetella</taxon>
    </lineage>
</organism>
<reference key="1">
    <citation type="journal article" date="2003" name="Nat. Genet.">
        <title>Comparative analysis of the genome sequences of Bordetella pertussis, Bordetella parapertussis and Bordetella bronchiseptica.</title>
        <authorList>
            <person name="Parkhill J."/>
            <person name="Sebaihia M."/>
            <person name="Preston A."/>
            <person name="Murphy L.D."/>
            <person name="Thomson N.R."/>
            <person name="Harris D.E."/>
            <person name="Holden M.T.G."/>
            <person name="Churcher C.M."/>
            <person name="Bentley S.D."/>
            <person name="Mungall K.L."/>
            <person name="Cerdeno-Tarraga A.-M."/>
            <person name="Temple L."/>
            <person name="James K.D."/>
            <person name="Harris B."/>
            <person name="Quail M.A."/>
            <person name="Achtman M."/>
            <person name="Atkin R."/>
            <person name="Baker S."/>
            <person name="Basham D."/>
            <person name="Bason N."/>
            <person name="Cherevach I."/>
            <person name="Chillingworth T."/>
            <person name="Collins M."/>
            <person name="Cronin A."/>
            <person name="Davis P."/>
            <person name="Doggett J."/>
            <person name="Feltwell T."/>
            <person name="Goble A."/>
            <person name="Hamlin N."/>
            <person name="Hauser H."/>
            <person name="Holroyd S."/>
            <person name="Jagels K."/>
            <person name="Leather S."/>
            <person name="Moule S."/>
            <person name="Norberczak H."/>
            <person name="O'Neil S."/>
            <person name="Ormond D."/>
            <person name="Price C."/>
            <person name="Rabbinowitsch E."/>
            <person name="Rutter S."/>
            <person name="Sanders M."/>
            <person name="Saunders D."/>
            <person name="Seeger K."/>
            <person name="Sharp S."/>
            <person name="Simmonds M."/>
            <person name="Skelton J."/>
            <person name="Squares R."/>
            <person name="Squares S."/>
            <person name="Stevens K."/>
            <person name="Unwin L."/>
            <person name="Whitehead S."/>
            <person name="Barrell B.G."/>
            <person name="Maskell D.J."/>
        </authorList>
    </citation>
    <scope>NUCLEOTIDE SEQUENCE [LARGE SCALE GENOMIC DNA]</scope>
    <source>
        <strain>12822 / ATCC BAA-587 / NCTC 13253</strain>
    </source>
</reference>
<proteinExistence type="inferred from homology"/>
<keyword id="KW-0963">Cytoplasm</keyword>
<keyword id="KW-0227">DNA damage</keyword>
<keyword id="KW-0234">DNA repair</keyword>
<keyword id="KW-0235">DNA replication</keyword>
<keyword id="KW-0239">DNA-directed DNA polymerase</keyword>
<keyword id="KW-0548">Nucleotidyltransferase</keyword>
<keyword id="KW-0808">Transferase</keyword>
<comment type="function">
    <text evidence="1">DNA polymerase involved in damage-induced mutagenesis and translesion synthesis (TLS). It is not the major replicative DNA polymerase.</text>
</comment>
<comment type="catalytic activity">
    <reaction evidence="1">
        <text>DNA(n) + a 2'-deoxyribonucleoside 5'-triphosphate = DNA(n+1) + diphosphate</text>
        <dbReference type="Rhea" id="RHEA:22508"/>
        <dbReference type="Rhea" id="RHEA-COMP:17339"/>
        <dbReference type="Rhea" id="RHEA-COMP:17340"/>
        <dbReference type="ChEBI" id="CHEBI:33019"/>
        <dbReference type="ChEBI" id="CHEBI:61560"/>
        <dbReference type="ChEBI" id="CHEBI:173112"/>
        <dbReference type="EC" id="2.7.7.7"/>
    </reaction>
</comment>
<comment type="subcellular location">
    <subcellularLocation>
        <location evidence="1">Cytoplasm</location>
    </subcellularLocation>
</comment>
<comment type="similarity">
    <text evidence="1">Belongs to the DNA polymerase type-C family. DnaE2 subfamily.</text>
</comment>
<accession>Q7W9W1</accession>
<protein>
    <recommendedName>
        <fullName evidence="1">Error-prone DNA polymerase</fullName>
        <ecNumber evidence="1">2.7.7.7</ecNumber>
    </recommendedName>
</protein>
<dbReference type="EC" id="2.7.7.7" evidence="1"/>
<dbReference type="EMBL" id="BX640428">
    <property type="protein sequence ID" value="CAE36941.1"/>
    <property type="molecule type" value="Genomic_DNA"/>
</dbReference>
<dbReference type="RefSeq" id="WP_010928129.1">
    <property type="nucleotide sequence ID" value="NC_002928.3"/>
</dbReference>
<dbReference type="SMR" id="Q7W9W1"/>
<dbReference type="GeneID" id="93203399"/>
<dbReference type="KEGG" id="bpa:BPP1640"/>
<dbReference type="HOGENOM" id="CLU_001600_4_0_4"/>
<dbReference type="Proteomes" id="UP000001421">
    <property type="component" value="Chromosome"/>
</dbReference>
<dbReference type="GO" id="GO:0005737">
    <property type="term" value="C:cytoplasm"/>
    <property type="evidence" value="ECO:0007669"/>
    <property type="project" value="UniProtKB-SubCell"/>
</dbReference>
<dbReference type="GO" id="GO:0008408">
    <property type="term" value="F:3'-5' exonuclease activity"/>
    <property type="evidence" value="ECO:0007669"/>
    <property type="project" value="InterPro"/>
</dbReference>
<dbReference type="GO" id="GO:0003887">
    <property type="term" value="F:DNA-directed DNA polymerase activity"/>
    <property type="evidence" value="ECO:0007669"/>
    <property type="project" value="UniProtKB-UniRule"/>
</dbReference>
<dbReference type="GO" id="GO:0003676">
    <property type="term" value="F:nucleic acid binding"/>
    <property type="evidence" value="ECO:0007669"/>
    <property type="project" value="InterPro"/>
</dbReference>
<dbReference type="GO" id="GO:0006281">
    <property type="term" value="P:DNA repair"/>
    <property type="evidence" value="ECO:0007669"/>
    <property type="project" value="UniProtKB-UniRule"/>
</dbReference>
<dbReference type="GO" id="GO:0006260">
    <property type="term" value="P:DNA replication"/>
    <property type="evidence" value="ECO:0007669"/>
    <property type="project" value="UniProtKB-KW"/>
</dbReference>
<dbReference type="CDD" id="cd04485">
    <property type="entry name" value="DnaE_OBF"/>
    <property type="match status" value="1"/>
</dbReference>
<dbReference type="CDD" id="cd07434">
    <property type="entry name" value="PHP_PolIIIA_DnaE2"/>
    <property type="match status" value="1"/>
</dbReference>
<dbReference type="Gene3D" id="1.10.150.870">
    <property type="match status" value="1"/>
</dbReference>
<dbReference type="Gene3D" id="3.20.20.140">
    <property type="entry name" value="Metal-dependent hydrolases"/>
    <property type="match status" value="1"/>
</dbReference>
<dbReference type="HAMAP" id="MF_01902">
    <property type="entry name" value="DNApol_error_prone"/>
    <property type="match status" value="1"/>
</dbReference>
<dbReference type="InterPro" id="IPR011708">
    <property type="entry name" value="DNA_pol3_alpha_NTPase_dom"/>
</dbReference>
<dbReference type="InterPro" id="IPR040982">
    <property type="entry name" value="DNA_pol3_finger"/>
</dbReference>
<dbReference type="InterPro" id="IPR023073">
    <property type="entry name" value="DnaE2"/>
</dbReference>
<dbReference type="InterPro" id="IPR004805">
    <property type="entry name" value="DnaE2/DnaE/PolC"/>
</dbReference>
<dbReference type="InterPro" id="IPR029460">
    <property type="entry name" value="DNAPol_HHH"/>
</dbReference>
<dbReference type="InterPro" id="IPR004365">
    <property type="entry name" value="NA-bd_OB_tRNA"/>
</dbReference>
<dbReference type="InterPro" id="IPR004013">
    <property type="entry name" value="PHP_dom"/>
</dbReference>
<dbReference type="InterPro" id="IPR003141">
    <property type="entry name" value="Pol/His_phosphatase_N"/>
</dbReference>
<dbReference type="InterPro" id="IPR016195">
    <property type="entry name" value="Pol/histidinol_Pase-like"/>
</dbReference>
<dbReference type="NCBIfam" id="TIGR00594">
    <property type="entry name" value="polc"/>
    <property type="match status" value="1"/>
</dbReference>
<dbReference type="NCBIfam" id="NF004225">
    <property type="entry name" value="PRK05672.1"/>
    <property type="match status" value="1"/>
</dbReference>
<dbReference type="PANTHER" id="PTHR32294">
    <property type="entry name" value="DNA POLYMERASE III SUBUNIT ALPHA"/>
    <property type="match status" value="1"/>
</dbReference>
<dbReference type="PANTHER" id="PTHR32294:SF4">
    <property type="entry name" value="ERROR-PRONE DNA POLYMERASE"/>
    <property type="match status" value="1"/>
</dbReference>
<dbReference type="Pfam" id="PF07733">
    <property type="entry name" value="DNA_pol3_alpha"/>
    <property type="match status" value="1"/>
</dbReference>
<dbReference type="Pfam" id="PF17657">
    <property type="entry name" value="DNA_pol3_finger"/>
    <property type="match status" value="1"/>
</dbReference>
<dbReference type="Pfam" id="PF14579">
    <property type="entry name" value="HHH_6"/>
    <property type="match status" value="1"/>
</dbReference>
<dbReference type="Pfam" id="PF02811">
    <property type="entry name" value="PHP"/>
    <property type="match status" value="1"/>
</dbReference>
<dbReference type="Pfam" id="PF01336">
    <property type="entry name" value="tRNA_anti-codon"/>
    <property type="match status" value="1"/>
</dbReference>
<dbReference type="SMART" id="SM00481">
    <property type="entry name" value="POLIIIAc"/>
    <property type="match status" value="1"/>
</dbReference>
<dbReference type="SUPFAM" id="SSF89550">
    <property type="entry name" value="PHP domain-like"/>
    <property type="match status" value="1"/>
</dbReference>
<name>DNAE2_BORPA</name>
<gene>
    <name evidence="1" type="primary">dnaE2</name>
    <name type="ordered locus">BPP1640</name>
</gene>
<evidence type="ECO:0000255" key="1">
    <source>
        <dbReference type="HAMAP-Rule" id="MF_01902"/>
    </source>
</evidence>
<sequence length="1052" mass="115065">MSAILPGYAELHCQSNFSFLQGASHPEELVTRAGELGYAALALTDECSLAGVVRAHVEAREQKLPLIIGSSFTLQAGADAPPLDLTLLAQNREGYGNLAELITLGRGRAAKGQYLLTPADIEAPAGDNAHLRGMPDCLAILAPPPGLAAERLAEQARWLAAQCPGRAWIGLTLLHHCRDDLHRAAVEHAAHASGLPIVALGQAQMHRRSRKPLHDTLAAIRTGRSVGQCGYDLAANAERHLRSRLRLASLYPAQALAQTLAIARRCTFSLDELQYEYPDEIVPAGHTPASYLRQQTYLGARQRFPEGMTPAVAAQVEKELALINELRYEAYFLTVYDIVGYARSQGILCQGRGSAANSAVCYCLGITAVDPARGNTLFERFISKERNEPPDIDVDFEHQRREEVIQYIYEKYGRQRAALTAVVISYRPRSVLRDTGRALGVDNGIIDAVARAHQWWDGKKEMLRSLAACGLDPASRVARQWAELAETLMGFPRHLSQHPGGFVISRGKLSRLVPIENAAMPGRSVVQWDKDDLDALRLLKVDVLALGMLSVLRRALALAGQRRGRPLALHEIPPDDDATYDMICAADTIGVFQIESRAQMSMLPRLRPRQYYDLVVQVAIVRPGPIQGGMVPPYLRRRQGREDITYPGPAVRKALARTLGVPIFQEQVMQIAVDAAGFTPGEADALRRSMAAWRRKGGVDKFRAQLVGGLLARNYTADFAQALFRQIEGFGEYGFPESHAASFALLAYASSWLKCHEPEAFLAALLNSQPMGFYAPAQLVQDARRHGVRVLPADVLYSGWEASLQDAPGAARPAVRLGLNLVKGLREDSARAIEQARVRRPFADTADMARRAGLPRQALDALAAADALRTLAGHRRLASWQAAASAQSRDLLREAVIVETETPALPAPSEGQTVAADYRSVGLTLGRHPLALLRPQLAARNFQTAAVLNTYPNRRLARACGIVTVRQRPQTAKGTIFVTLEDETGPINAVVRPELIERQRRELLDATLLGIYGTWQSVDGVRHLVAQRLVDLSSLLGQLSQDGLAAASRNFH</sequence>
<feature type="chain" id="PRO_0000103368" description="Error-prone DNA polymerase">
    <location>
        <begin position="1"/>
        <end position="1052"/>
    </location>
</feature>